<proteinExistence type="evidence at transcript level"/>
<gene>
    <name evidence="2" type="primary">slc38a9</name>
</gene>
<reference key="1">
    <citation type="submission" date="2004-07" db="EMBL/GenBank/DDBJ databases">
        <authorList>
            <consortium name="NIH - Xenopus Gene Collection (XGC) project"/>
        </authorList>
    </citation>
    <scope>NUCLEOTIDE SEQUENCE [LARGE SCALE MRNA]</scope>
    <source>
        <tissue>Embryo</tissue>
    </source>
</reference>
<name>S38A9_XENLA</name>
<organism>
    <name type="scientific">Xenopus laevis</name>
    <name type="common">African clawed frog</name>
    <dbReference type="NCBI Taxonomy" id="8355"/>
    <lineage>
        <taxon>Eukaryota</taxon>
        <taxon>Metazoa</taxon>
        <taxon>Chordata</taxon>
        <taxon>Craniata</taxon>
        <taxon>Vertebrata</taxon>
        <taxon>Euteleostomi</taxon>
        <taxon>Amphibia</taxon>
        <taxon>Batrachia</taxon>
        <taxon>Anura</taxon>
        <taxon>Pipoidea</taxon>
        <taxon>Pipidae</taxon>
        <taxon>Xenopodinae</taxon>
        <taxon>Xenopus</taxon>
        <taxon>Xenopus</taxon>
    </lineage>
</organism>
<evidence type="ECO:0000250" key="1">
    <source>
        <dbReference type="UniProtKB" id="Q08BA4"/>
    </source>
</evidence>
<evidence type="ECO:0000250" key="2">
    <source>
        <dbReference type="UniProtKB" id="Q8NBW4"/>
    </source>
</evidence>
<evidence type="ECO:0000255" key="3">
    <source>
        <dbReference type="PROSITE-ProRule" id="PRU00498"/>
    </source>
</evidence>
<evidence type="ECO:0000305" key="4"/>
<keyword id="KW-0029">Amino-acid transport</keyword>
<keyword id="KW-1015">Disulfide bond</keyword>
<keyword id="KW-0967">Endosome</keyword>
<keyword id="KW-0325">Glycoprotein</keyword>
<keyword id="KW-0458">Lysosome</keyword>
<keyword id="KW-0472">Membrane</keyword>
<keyword id="KW-0479">Metal-binding</keyword>
<keyword id="KW-1185">Reference proteome</keyword>
<keyword id="KW-0915">Sodium</keyword>
<keyword id="KW-0812">Transmembrane</keyword>
<keyword id="KW-1133">Transmembrane helix</keyword>
<keyword id="KW-0813">Transport</keyword>
<protein>
    <recommendedName>
        <fullName evidence="2">Neutral amino acid transporter 9</fullName>
    </recommendedName>
    <alternativeName>
        <fullName>Solute carrier family 38 member 9</fullName>
    </alternativeName>
</protein>
<accession>Q6DFK0</accession>
<dbReference type="EMBL" id="BC076736">
    <property type="protein sequence ID" value="AAH76736.1"/>
    <property type="molecule type" value="mRNA"/>
</dbReference>
<dbReference type="SMR" id="Q6DFK0"/>
<dbReference type="GlyCosmos" id="Q6DFK0">
    <property type="glycosylation" value="4 sites, No reported glycans"/>
</dbReference>
<dbReference type="Proteomes" id="UP000186698">
    <property type="component" value="Unplaced"/>
</dbReference>
<dbReference type="GO" id="GO:0005770">
    <property type="term" value="C:late endosome"/>
    <property type="evidence" value="ECO:0000250"/>
    <property type="project" value="UniProtKB"/>
</dbReference>
<dbReference type="GO" id="GO:0031902">
    <property type="term" value="C:late endosome membrane"/>
    <property type="evidence" value="ECO:0007669"/>
    <property type="project" value="UniProtKB-SubCell"/>
</dbReference>
<dbReference type="GO" id="GO:0005765">
    <property type="term" value="C:lysosomal membrane"/>
    <property type="evidence" value="ECO:0000318"/>
    <property type="project" value="GO_Central"/>
</dbReference>
<dbReference type="GO" id="GO:0005764">
    <property type="term" value="C:lysosome"/>
    <property type="evidence" value="ECO:0000250"/>
    <property type="project" value="UniProtKB"/>
</dbReference>
<dbReference type="GO" id="GO:0015171">
    <property type="term" value="F:amino acid transmembrane transporter activity"/>
    <property type="evidence" value="ECO:0000250"/>
    <property type="project" value="UniProtKB"/>
</dbReference>
<dbReference type="GO" id="GO:0034618">
    <property type="term" value="F:arginine binding"/>
    <property type="evidence" value="ECO:0000250"/>
    <property type="project" value="UniProtKB"/>
</dbReference>
<dbReference type="GO" id="GO:0015485">
    <property type="term" value="F:cholesterol binding"/>
    <property type="evidence" value="ECO:0000250"/>
    <property type="project" value="UniProtKB"/>
</dbReference>
<dbReference type="GO" id="GO:0005085">
    <property type="term" value="F:guanyl-nucleotide exchange factor activity"/>
    <property type="evidence" value="ECO:0000250"/>
    <property type="project" value="UniProtKB"/>
</dbReference>
<dbReference type="GO" id="GO:0015179">
    <property type="term" value="F:L-amino acid transmembrane transporter activity"/>
    <property type="evidence" value="ECO:0000318"/>
    <property type="project" value="GO_Central"/>
</dbReference>
<dbReference type="GO" id="GO:0061459">
    <property type="term" value="F:L-arginine transmembrane transporter activity"/>
    <property type="evidence" value="ECO:0000250"/>
    <property type="project" value="UniProtKB"/>
</dbReference>
<dbReference type="GO" id="GO:0015182">
    <property type="term" value="F:L-asparagine transmembrane transporter activity"/>
    <property type="evidence" value="ECO:0000250"/>
    <property type="project" value="UniProtKB"/>
</dbReference>
<dbReference type="GO" id="GO:0015186">
    <property type="term" value="F:L-glutamine transmembrane transporter activity"/>
    <property type="evidence" value="ECO:0000250"/>
    <property type="project" value="UniProtKB"/>
</dbReference>
<dbReference type="GO" id="GO:0046872">
    <property type="term" value="F:metal ion binding"/>
    <property type="evidence" value="ECO:0007669"/>
    <property type="project" value="UniProtKB-KW"/>
</dbReference>
<dbReference type="GO" id="GO:0032935">
    <property type="term" value="F:sterol sensor activity"/>
    <property type="evidence" value="ECO:0000250"/>
    <property type="project" value="UniProtKB"/>
</dbReference>
<dbReference type="GO" id="GO:0003333">
    <property type="term" value="P:amino acid transmembrane transport"/>
    <property type="evidence" value="ECO:0000250"/>
    <property type="project" value="UniProtKB"/>
</dbReference>
<dbReference type="GO" id="GO:0006867">
    <property type="term" value="P:asparagine transport"/>
    <property type="evidence" value="ECO:0000250"/>
    <property type="project" value="UniProtKB"/>
</dbReference>
<dbReference type="GO" id="GO:0071230">
    <property type="term" value="P:cellular response to amino acid stimulus"/>
    <property type="evidence" value="ECO:0000250"/>
    <property type="project" value="UniProtKB"/>
</dbReference>
<dbReference type="GO" id="GO:0006868">
    <property type="term" value="P:glutamine transport"/>
    <property type="evidence" value="ECO:0000250"/>
    <property type="project" value="UniProtKB"/>
</dbReference>
<dbReference type="GO" id="GO:1903826">
    <property type="term" value="P:L-arginine transmembrane transport"/>
    <property type="evidence" value="ECO:0000250"/>
    <property type="project" value="UniProtKB"/>
</dbReference>
<dbReference type="GO" id="GO:0032008">
    <property type="term" value="P:positive regulation of TOR signaling"/>
    <property type="evidence" value="ECO:0000250"/>
    <property type="project" value="UniProtKB"/>
</dbReference>
<dbReference type="GO" id="GO:1904263">
    <property type="term" value="P:positive regulation of TORC1 signaling"/>
    <property type="evidence" value="ECO:0000250"/>
    <property type="project" value="UniProtKB"/>
</dbReference>
<dbReference type="InterPro" id="IPR013057">
    <property type="entry name" value="AA_transpt_TM"/>
</dbReference>
<dbReference type="PANTHER" id="PTHR22950">
    <property type="entry name" value="AMINO ACID TRANSPORTER"/>
    <property type="match status" value="1"/>
</dbReference>
<dbReference type="PANTHER" id="PTHR22950:SF244">
    <property type="entry name" value="NEUTRAL AMINO ACID TRANSPORTER 9"/>
    <property type="match status" value="1"/>
</dbReference>
<dbReference type="Pfam" id="PF01490">
    <property type="entry name" value="Aa_trans"/>
    <property type="match status" value="2"/>
</dbReference>
<sequence>MDSDQTPLINPSLFEECAQNHFAAADSRSRRPFHIEPSYITSINDDEPQRITSEASAMNKRIHYYSKLSYPSGGGLIAPDHVLPAPEEIYVYSPLGTALKIDGSDGSEKNSSIVTIFMIWNTMMGTSILSIPWGIKQAGFTTGVCVLFLMGILTLYCCYRVVKSRGTIPLTDTSTWEFPDVCQYYFGSFGRWSSLLFSMVSLIGAMIVYWVLMSNFLFNTGKFIYNYVNDVNITDDVLSNNGTDKVICPNPDSTGPLNKSMDTYYGNGTNLEHFETWWSKTNTVPFYLVVLLLPLLGFRSPSFFAKFNILGTVSIIYLVSLVTLKAAHLGFHLQFSWNQVQTFFVPEFRVSFPQLTGILTLAFFIHNCIITLLKNNRNQKNNVRDLSIAYLLVGLTYVYVGVVVFASFPSPPLSKQCIEQNFLDNFPSSDILAFVARIFLLFQMMTVYPLLGYLVRVQLLGHIFGDIYPSIFHVLALNIAVVGVGVIMARFYPNIGGIIRFSGAACGLAFVFVYPSLIHMISLHRRGQLRIHSILIHVSIIVLGISNLIAQFFM</sequence>
<feature type="chain" id="PRO_0000328844" description="Neutral amino acid transporter 9">
    <location>
        <begin position="1"/>
        <end position="554"/>
    </location>
</feature>
<feature type="topological domain" description="Cytoplasmic" evidence="4">
    <location>
        <begin position="1"/>
        <end position="112"/>
    </location>
</feature>
<feature type="transmembrane region" description="Helical; Name=1" evidence="1">
    <location>
        <begin position="113"/>
        <end position="133"/>
    </location>
</feature>
<feature type="topological domain" description="Lumenal" evidence="4">
    <location>
        <begin position="134"/>
        <end position="139"/>
    </location>
</feature>
<feature type="transmembrane region" description="Helical; Name=2" evidence="1">
    <location>
        <begin position="140"/>
        <end position="160"/>
    </location>
</feature>
<feature type="topological domain" description="Cytoplasmic" evidence="4">
    <location>
        <begin position="161"/>
        <end position="191"/>
    </location>
</feature>
<feature type="transmembrane region" description="Helical; Name=3" evidence="1">
    <location>
        <begin position="192"/>
        <end position="218"/>
    </location>
</feature>
<feature type="topological domain" description="Lumenal" evidence="4">
    <location>
        <begin position="219"/>
        <end position="276"/>
    </location>
</feature>
<feature type="transmembrane region" description="Helical; Name=4" evidence="1">
    <location>
        <begin position="277"/>
        <end position="293"/>
    </location>
</feature>
<feature type="topological domain" description="Cytoplasmic" evidence="4">
    <location>
        <begin position="294"/>
        <end position="302"/>
    </location>
</feature>
<feature type="transmembrane region" description="Helical; Name=5" evidence="1">
    <location>
        <begin position="303"/>
        <end position="327"/>
    </location>
</feature>
<feature type="topological domain" description="Lumenal" evidence="4">
    <location>
        <begin position="328"/>
        <end position="349"/>
    </location>
</feature>
<feature type="transmembrane region" description="Helical; Name=6" evidence="1">
    <location>
        <begin position="350"/>
        <end position="370"/>
    </location>
</feature>
<feature type="topological domain" description="Cytoplasmic" evidence="4">
    <location>
        <begin position="371"/>
        <end position="387"/>
    </location>
</feature>
<feature type="transmembrane region" description="Helical; Name=7" evidence="1">
    <location>
        <begin position="388"/>
        <end position="408"/>
    </location>
</feature>
<feature type="topological domain" description="Lumenal" evidence="4">
    <location>
        <begin position="409"/>
        <end position="430"/>
    </location>
</feature>
<feature type="transmembrane region" description="Helical; Name=8" evidence="1">
    <location>
        <begin position="431"/>
        <end position="451"/>
    </location>
</feature>
<feature type="topological domain" description="Cytoplasmic" evidence="4">
    <location>
        <begin position="452"/>
        <end position="472"/>
    </location>
</feature>
<feature type="transmembrane region" description="Helical; Name=9" evidence="1">
    <location>
        <begin position="473"/>
        <end position="493"/>
    </location>
</feature>
<feature type="topological domain" description="Lumenal" evidence="4">
    <location>
        <begin position="494"/>
        <end position="500"/>
    </location>
</feature>
<feature type="transmembrane region" description="Helical; Name=10" evidence="1">
    <location>
        <begin position="501"/>
        <end position="521"/>
    </location>
</feature>
<feature type="topological domain" description="Cytoplasmic" evidence="4">
    <location>
        <begin position="522"/>
        <end position="533"/>
    </location>
</feature>
<feature type="transmembrane region" description="Helical; Name=11" evidence="1">
    <location>
        <begin position="534"/>
        <end position="554"/>
    </location>
</feature>
<feature type="region of interest" description="Important for arginine binding and amino acid transport" evidence="1">
    <location>
        <begin position="122"/>
        <end position="127"/>
    </location>
</feature>
<feature type="short sequence motif" description="CARC motif" evidence="2">
    <location>
        <begin position="437"/>
        <end position="447"/>
    </location>
</feature>
<feature type="short sequence motif" description="CRAC motif" evidence="2">
    <location>
        <begin position="450"/>
        <end position="456"/>
    </location>
</feature>
<feature type="binding site" evidence="1">
    <location>
        <position position="127"/>
    </location>
    <ligand>
        <name>arginine</name>
        <dbReference type="ChEBI" id="CHEBI:32696"/>
    </ligand>
</feature>
<feature type="glycosylation site" description="N-linked (GlcNAc...) asparagine" evidence="3">
    <location>
        <position position="232"/>
    </location>
</feature>
<feature type="glycosylation site" description="N-linked (GlcNAc...) asparagine" evidence="3">
    <location>
        <position position="241"/>
    </location>
</feature>
<feature type="glycosylation site" description="N-linked (GlcNAc...) asparagine" evidence="3">
    <location>
        <position position="258"/>
    </location>
</feature>
<feature type="glycosylation site" description="N-linked (GlcNAc...) asparagine" evidence="3">
    <location>
        <position position="267"/>
    </location>
</feature>
<feature type="disulfide bond" evidence="1">
    <location>
        <begin position="248"/>
        <end position="417"/>
    </location>
</feature>
<comment type="function">
    <text evidence="2">Lysosomal amino acid transporter involved in the activation of mTORC1 in response to amino acid levels. Probably acts as an amino acid sensor of the Rag GTPases and Ragulator complexes, 2 complexes involved in amino acid sensing and activation of mTORC1, a signaling complex promoting cell growth in response to growth factors, energy levels, and amino acids. Following activation by amino acids, the Ragulator and Rag GTPases function as a scaffold recruiting mTORC1 to lysosomes where it is in turn activated. SLC38A9 mediates transport of amino acids with low capacity and specificity with a slight preference for polar amino acids. Acts as an arginine sensor. Following activation by arginine binding, mediates transport of L-glutamine, leucine and tyrosine with high efficiency, and is required for the efficient utilization of these amino acids after lysosomal protein degradation. However, the transport mechanism is not well defined and the role of sodium is not clear. Guanine exchange factor (GEF) that, upon arginine binding, stimulates GDP release from RRAGA and therefore activates the Rag GTPase heterodimer and the mTORC1 pathway in response to nutrient sufficiency.</text>
</comment>
<comment type="catalytic activity">
    <reaction evidence="2">
        <text>L-leucine(in) = L-leucine(out)</text>
        <dbReference type="Rhea" id="RHEA:73011"/>
        <dbReference type="ChEBI" id="CHEBI:57427"/>
    </reaction>
</comment>
<comment type="catalytic activity">
    <reaction evidence="2">
        <text>L-tyrosine(in) = L-tyrosine(out)</text>
        <dbReference type="Rhea" id="RHEA:68572"/>
        <dbReference type="ChEBI" id="CHEBI:58315"/>
    </reaction>
</comment>
<comment type="catalytic activity">
    <reaction evidence="2">
        <text>L-glutamine(out) = L-glutamine(in)</text>
        <dbReference type="Rhea" id="RHEA:73419"/>
        <dbReference type="ChEBI" id="CHEBI:58359"/>
    </reaction>
</comment>
<comment type="catalytic activity">
    <reaction evidence="2">
        <text>L-asparagine(out) = L-asparagine(in)</text>
        <dbReference type="Rhea" id="RHEA:73423"/>
        <dbReference type="ChEBI" id="CHEBI:58048"/>
    </reaction>
</comment>
<comment type="subunit">
    <text evidence="2">Associated component of the Ragulator complex. Associated component of the Rag GTPases heterodimers.</text>
</comment>
<comment type="subcellular location">
    <subcellularLocation>
        <location evidence="2">Lysosome membrane</location>
        <topology evidence="1">Multi-pass membrane protein</topology>
    </subcellularLocation>
    <subcellularLocation>
        <location evidence="2">Late endosome membrane</location>
        <topology evidence="1">Multi-pass membrane protein</topology>
    </subcellularLocation>
</comment>
<comment type="domain">
    <text evidence="1 2">The cytosolic N-terminus part of the protein mediates interaction with the Ragulator complex. The cytosolic N-terminus part of the protein mediates interaction with the Rag GTPase heterodimer in a RRAGA GDP-loaded state dependent and upon arginine binding, leading to the GDP release and SLC38A9 dissociation from the activated Rag GTPase heterodimer (By similarity). The cytosolic N-terminus part of the protein exists at least in two distinct conformations; The first is when the N-terminus is bound snugly in the arginine binding site (in the absence of arginine, low luminal arginine state) and the second is where the N-terminus is released and the substrate-binding site is occupied by arginine (in the presence of arginine, high luminal arginine state) (By similarity).</text>
</comment>
<comment type="domain">
    <text evidence="2">The CARC and CRAC motifs mediate binding to cholesterol.</text>
</comment>
<comment type="PTM">
    <text evidence="2">Glycosylated.</text>
</comment>
<comment type="similarity">
    <text evidence="4">Belongs to the amino acid/polyamine transporter 2 family. SLC38A9 subfamily.</text>
</comment>